<comment type="function">
    <text evidence="1">Required for maturation of 30S ribosomal subunits.</text>
</comment>
<comment type="subcellular location">
    <subcellularLocation>
        <location evidence="1">Cytoplasm</location>
    </subcellularLocation>
</comment>
<comment type="similarity">
    <text evidence="1">Belongs to the RimP family.</text>
</comment>
<sequence>MSDKATDIANLLAPTVVSLGLELLGVEYLPAPGGATLRLYIDVPLAEQPERIINVDDCERVSREVSAQLDVEDPISGNYTLEVSSPGVDRPLFNLEQFARHQGESAKVTLKLPQDNRRRLQGRIEATDEAAGTITFIVDKTEVVVSADNIDKARIMPDWVALGLAPSKPTGPAPKRPKPNTNSSSNEPAAKKPRAE</sequence>
<accession>B2FN92</accession>
<evidence type="ECO:0000255" key="1">
    <source>
        <dbReference type="HAMAP-Rule" id="MF_01077"/>
    </source>
</evidence>
<evidence type="ECO:0000256" key="2">
    <source>
        <dbReference type="SAM" id="MobiDB-lite"/>
    </source>
</evidence>
<reference key="1">
    <citation type="journal article" date="2008" name="Genome Biol.">
        <title>The complete genome, comparative and functional analysis of Stenotrophomonas maltophilia reveals an organism heavily shielded by drug resistance determinants.</title>
        <authorList>
            <person name="Crossman L.C."/>
            <person name="Gould V.C."/>
            <person name="Dow J.M."/>
            <person name="Vernikos G.S."/>
            <person name="Okazaki A."/>
            <person name="Sebaihia M."/>
            <person name="Saunders D."/>
            <person name="Arrowsmith C."/>
            <person name="Carver T."/>
            <person name="Peters N."/>
            <person name="Adlem E."/>
            <person name="Kerhornou A."/>
            <person name="Lord A."/>
            <person name="Murphy L."/>
            <person name="Seeger K."/>
            <person name="Squares R."/>
            <person name="Rutter S."/>
            <person name="Quail M.A."/>
            <person name="Rajandream M.A."/>
            <person name="Harris D."/>
            <person name="Churcher C."/>
            <person name="Bentley S.D."/>
            <person name="Parkhill J."/>
            <person name="Thomson N.R."/>
            <person name="Avison M.B."/>
        </authorList>
    </citation>
    <scope>NUCLEOTIDE SEQUENCE [LARGE SCALE GENOMIC DNA]</scope>
    <source>
        <strain>K279a</strain>
    </source>
</reference>
<name>RIMP_STRMK</name>
<proteinExistence type="inferred from homology"/>
<dbReference type="EMBL" id="AM743169">
    <property type="protein sequence ID" value="CAQ46819.1"/>
    <property type="molecule type" value="Genomic_DNA"/>
</dbReference>
<dbReference type="RefSeq" id="WP_005410450.1">
    <property type="nucleotide sequence ID" value="NC_010943.1"/>
</dbReference>
<dbReference type="SMR" id="B2FN92"/>
<dbReference type="EnsemblBacteria" id="CAQ46819">
    <property type="protein sequence ID" value="CAQ46819"/>
    <property type="gene ID" value="Smlt3391"/>
</dbReference>
<dbReference type="GeneID" id="93834392"/>
<dbReference type="KEGG" id="sml:Smlt3391"/>
<dbReference type="eggNOG" id="COG0779">
    <property type="taxonomic scope" value="Bacteria"/>
</dbReference>
<dbReference type="HOGENOM" id="CLU_070525_1_1_6"/>
<dbReference type="Proteomes" id="UP000008840">
    <property type="component" value="Chromosome"/>
</dbReference>
<dbReference type="GO" id="GO:0005829">
    <property type="term" value="C:cytosol"/>
    <property type="evidence" value="ECO:0007669"/>
    <property type="project" value="TreeGrafter"/>
</dbReference>
<dbReference type="GO" id="GO:0000028">
    <property type="term" value="P:ribosomal small subunit assembly"/>
    <property type="evidence" value="ECO:0007669"/>
    <property type="project" value="TreeGrafter"/>
</dbReference>
<dbReference type="GO" id="GO:0006412">
    <property type="term" value="P:translation"/>
    <property type="evidence" value="ECO:0007669"/>
    <property type="project" value="TreeGrafter"/>
</dbReference>
<dbReference type="CDD" id="cd01734">
    <property type="entry name" value="YlxS_C"/>
    <property type="match status" value="1"/>
</dbReference>
<dbReference type="FunFam" id="3.30.300.70:FF:000001">
    <property type="entry name" value="Ribosome maturation factor RimP"/>
    <property type="match status" value="1"/>
</dbReference>
<dbReference type="Gene3D" id="2.30.30.180">
    <property type="entry name" value="Ribosome maturation factor RimP, C-terminal domain"/>
    <property type="match status" value="1"/>
</dbReference>
<dbReference type="Gene3D" id="3.30.300.70">
    <property type="entry name" value="RimP-like superfamily, N-terminal"/>
    <property type="match status" value="1"/>
</dbReference>
<dbReference type="HAMAP" id="MF_01077">
    <property type="entry name" value="RimP"/>
    <property type="match status" value="1"/>
</dbReference>
<dbReference type="InterPro" id="IPR003728">
    <property type="entry name" value="Ribosome_maturation_RimP"/>
</dbReference>
<dbReference type="InterPro" id="IPR028998">
    <property type="entry name" value="RimP_C"/>
</dbReference>
<dbReference type="InterPro" id="IPR036847">
    <property type="entry name" value="RimP_C_sf"/>
</dbReference>
<dbReference type="InterPro" id="IPR028989">
    <property type="entry name" value="RimP_N"/>
</dbReference>
<dbReference type="InterPro" id="IPR035956">
    <property type="entry name" value="RimP_N_sf"/>
</dbReference>
<dbReference type="NCBIfam" id="NF000931">
    <property type="entry name" value="PRK00092.2-3"/>
    <property type="match status" value="1"/>
</dbReference>
<dbReference type="PANTHER" id="PTHR33867">
    <property type="entry name" value="RIBOSOME MATURATION FACTOR RIMP"/>
    <property type="match status" value="1"/>
</dbReference>
<dbReference type="PANTHER" id="PTHR33867:SF1">
    <property type="entry name" value="RIBOSOME MATURATION FACTOR RIMP"/>
    <property type="match status" value="1"/>
</dbReference>
<dbReference type="Pfam" id="PF17384">
    <property type="entry name" value="DUF150_C"/>
    <property type="match status" value="1"/>
</dbReference>
<dbReference type="Pfam" id="PF02576">
    <property type="entry name" value="RimP_N"/>
    <property type="match status" value="1"/>
</dbReference>
<dbReference type="SUPFAM" id="SSF74942">
    <property type="entry name" value="YhbC-like, C-terminal domain"/>
    <property type="match status" value="1"/>
</dbReference>
<dbReference type="SUPFAM" id="SSF75420">
    <property type="entry name" value="YhbC-like, N-terminal domain"/>
    <property type="match status" value="1"/>
</dbReference>
<feature type="chain" id="PRO_1000136797" description="Ribosome maturation factor RimP">
    <location>
        <begin position="1"/>
        <end position="196"/>
    </location>
</feature>
<feature type="region of interest" description="Disordered" evidence="2">
    <location>
        <begin position="163"/>
        <end position="196"/>
    </location>
</feature>
<gene>
    <name evidence="1" type="primary">rimP</name>
    <name type="ordered locus">Smlt3391</name>
</gene>
<protein>
    <recommendedName>
        <fullName evidence="1">Ribosome maturation factor RimP</fullName>
    </recommendedName>
</protein>
<organism>
    <name type="scientific">Stenotrophomonas maltophilia (strain K279a)</name>
    <dbReference type="NCBI Taxonomy" id="522373"/>
    <lineage>
        <taxon>Bacteria</taxon>
        <taxon>Pseudomonadati</taxon>
        <taxon>Pseudomonadota</taxon>
        <taxon>Gammaproteobacteria</taxon>
        <taxon>Lysobacterales</taxon>
        <taxon>Lysobacteraceae</taxon>
        <taxon>Stenotrophomonas</taxon>
        <taxon>Stenotrophomonas maltophilia group</taxon>
    </lineage>
</organism>
<keyword id="KW-0963">Cytoplasm</keyword>
<keyword id="KW-1185">Reference proteome</keyword>
<keyword id="KW-0690">Ribosome biogenesis</keyword>